<organism>
    <name type="scientific">Bacillus cereus (strain ZK / E33L)</name>
    <dbReference type="NCBI Taxonomy" id="288681"/>
    <lineage>
        <taxon>Bacteria</taxon>
        <taxon>Bacillati</taxon>
        <taxon>Bacillota</taxon>
        <taxon>Bacilli</taxon>
        <taxon>Bacillales</taxon>
        <taxon>Bacillaceae</taxon>
        <taxon>Bacillus</taxon>
        <taxon>Bacillus cereus group</taxon>
    </lineage>
</organism>
<proteinExistence type="inferred from homology"/>
<evidence type="ECO:0000255" key="1">
    <source>
        <dbReference type="HAMAP-Rule" id="MF_01209"/>
    </source>
</evidence>
<comment type="function">
    <text evidence="1">Small subunit of the glutamine-dependent carbamoyl phosphate synthetase (CPSase). CPSase catalyzes the formation of carbamoyl phosphate from the ammonia moiety of glutamine, carbonate, and phosphate donated by ATP, constituting the first step of 2 biosynthetic pathways, one leading to arginine and/or urea and the other to pyrimidine nucleotides. The small subunit (glutamine amidotransferase) binds and cleaves glutamine to supply the large subunit with the substrate ammonia.</text>
</comment>
<comment type="catalytic activity">
    <reaction evidence="1">
        <text>hydrogencarbonate + L-glutamine + 2 ATP + H2O = carbamoyl phosphate + L-glutamate + 2 ADP + phosphate + 2 H(+)</text>
        <dbReference type="Rhea" id="RHEA:18633"/>
        <dbReference type="ChEBI" id="CHEBI:15377"/>
        <dbReference type="ChEBI" id="CHEBI:15378"/>
        <dbReference type="ChEBI" id="CHEBI:17544"/>
        <dbReference type="ChEBI" id="CHEBI:29985"/>
        <dbReference type="ChEBI" id="CHEBI:30616"/>
        <dbReference type="ChEBI" id="CHEBI:43474"/>
        <dbReference type="ChEBI" id="CHEBI:58228"/>
        <dbReference type="ChEBI" id="CHEBI:58359"/>
        <dbReference type="ChEBI" id="CHEBI:456216"/>
        <dbReference type="EC" id="6.3.5.5"/>
    </reaction>
</comment>
<comment type="catalytic activity">
    <molecule>Carbamoyl phosphate synthase small chain</molecule>
    <reaction evidence="1">
        <text>L-glutamine + H2O = L-glutamate + NH4(+)</text>
        <dbReference type="Rhea" id="RHEA:15889"/>
        <dbReference type="ChEBI" id="CHEBI:15377"/>
        <dbReference type="ChEBI" id="CHEBI:28938"/>
        <dbReference type="ChEBI" id="CHEBI:29985"/>
        <dbReference type="ChEBI" id="CHEBI:58359"/>
    </reaction>
</comment>
<comment type="pathway">
    <text evidence="1">Amino-acid biosynthesis; L-arginine biosynthesis; carbamoyl phosphate from bicarbonate: step 1/1.</text>
</comment>
<comment type="pathway">
    <text evidence="1">Pyrimidine metabolism; UMP biosynthesis via de novo pathway; (S)-dihydroorotate from bicarbonate: step 1/3.</text>
</comment>
<comment type="subunit">
    <text evidence="1">Composed of two chains; the small (or glutamine) chain promotes the hydrolysis of glutamine to ammonia, which is used by the large (or ammonia) chain to synthesize carbamoyl phosphate. Tetramer of heterodimers (alpha,beta)4.</text>
</comment>
<comment type="similarity">
    <text evidence="1">Belongs to the CarA family.</text>
</comment>
<sequence length="365" mass="40391">MKRQLILEDGTVLIGTGFGGEIEKSGEVVFTTGMTGYQETLSDPSYCGQIVTFTYPLIGNYGINRDDFESIHPSVNGLIVNEICDHPSNFRNEISLNDYLKERKIPGLAGIDTRKLTRKIRQYGTLRGRLCNMDADVEYIVSQLKATVFTDHVKRVSTKDPYPSPGRGHRVVLVDFGMKHGILRELNKRDCDVIVVPYNTTAEEILRLSPDGIMLSNGPGDPKDVPEAIEMLKDIIGKVPLFGICLGHQLFALASGANTSKLKFGHRGLNHPVKNIATGKVAITSQNHGYAVEEESVENTELEITHVALNDGTVEGLRHKKFPAFTVQYHPEASAGPEDANDLFEDFLTMIENFKKEGEELCQNA</sequence>
<protein>
    <recommendedName>
        <fullName evidence="1">Carbamoyl phosphate synthase small chain</fullName>
        <ecNumber evidence="1">6.3.5.5</ecNumber>
    </recommendedName>
    <alternativeName>
        <fullName evidence="1">Carbamoyl phosphate synthetase glutamine chain</fullName>
    </alternativeName>
</protein>
<gene>
    <name evidence="1" type="primary">carA</name>
    <name type="ordered locus">BCE33L3646</name>
</gene>
<keyword id="KW-0028">Amino-acid biosynthesis</keyword>
<keyword id="KW-0055">Arginine biosynthesis</keyword>
<keyword id="KW-0067">ATP-binding</keyword>
<keyword id="KW-0315">Glutamine amidotransferase</keyword>
<keyword id="KW-0436">Ligase</keyword>
<keyword id="KW-0547">Nucleotide-binding</keyword>
<keyword id="KW-0665">Pyrimidine biosynthesis</keyword>
<reference key="1">
    <citation type="journal article" date="2006" name="J. Bacteriol.">
        <title>Pathogenomic sequence analysis of Bacillus cereus and Bacillus thuringiensis isolates closely related to Bacillus anthracis.</title>
        <authorList>
            <person name="Han C.S."/>
            <person name="Xie G."/>
            <person name="Challacombe J.F."/>
            <person name="Altherr M.R."/>
            <person name="Bhotika S.S."/>
            <person name="Bruce D."/>
            <person name="Campbell C.S."/>
            <person name="Campbell M.L."/>
            <person name="Chen J."/>
            <person name="Chertkov O."/>
            <person name="Cleland C."/>
            <person name="Dimitrijevic M."/>
            <person name="Doggett N.A."/>
            <person name="Fawcett J.J."/>
            <person name="Glavina T."/>
            <person name="Goodwin L.A."/>
            <person name="Hill K.K."/>
            <person name="Hitchcock P."/>
            <person name="Jackson P.J."/>
            <person name="Keim P."/>
            <person name="Kewalramani A.R."/>
            <person name="Longmire J."/>
            <person name="Lucas S."/>
            <person name="Malfatti S."/>
            <person name="McMurry K."/>
            <person name="Meincke L.J."/>
            <person name="Misra M."/>
            <person name="Moseman B.L."/>
            <person name="Mundt M."/>
            <person name="Munk A.C."/>
            <person name="Okinaka R.T."/>
            <person name="Parson-Quintana B."/>
            <person name="Reilly L.P."/>
            <person name="Richardson P."/>
            <person name="Robinson D.L."/>
            <person name="Rubin E."/>
            <person name="Saunders E."/>
            <person name="Tapia R."/>
            <person name="Tesmer J.G."/>
            <person name="Thayer N."/>
            <person name="Thompson L.S."/>
            <person name="Tice H."/>
            <person name="Ticknor L.O."/>
            <person name="Wills P.L."/>
            <person name="Brettin T.S."/>
            <person name="Gilna P."/>
        </authorList>
    </citation>
    <scope>NUCLEOTIDE SEQUENCE [LARGE SCALE GENOMIC DNA]</scope>
    <source>
        <strain>ZK / E33L</strain>
    </source>
</reference>
<feature type="chain" id="PRO_0000112250" description="Carbamoyl phosphate synthase small chain">
    <location>
        <begin position="1"/>
        <end position="365"/>
    </location>
</feature>
<feature type="domain" description="Glutamine amidotransferase type-1" evidence="1">
    <location>
        <begin position="170"/>
        <end position="357"/>
    </location>
</feature>
<feature type="region of interest" description="CPSase" evidence="1">
    <location>
        <begin position="1"/>
        <end position="169"/>
    </location>
</feature>
<feature type="region of interest" description="CPSase">
    <location>
        <begin position="1"/>
        <end position="166"/>
    </location>
</feature>
<feature type="active site" description="Nucleophile" evidence="1">
    <location>
        <position position="245"/>
    </location>
</feature>
<feature type="active site" evidence="1">
    <location>
        <position position="330"/>
    </location>
</feature>
<feature type="active site" evidence="1">
    <location>
        <position position="332"/>
    </location>
</feature>
<feature type="binding site" evidence="1">
    <location>
        <position position="45"/>
    </location>
    <ligand>
        <name>L-glutamine</name>
        <dbReference type="ChEBI" id="CHEBI:58359"/>
    </ligand>
</feature>
<feature type="binding site" evidence="1">
    <location>
        <position position="218"/>
    </location>
    <ligand>
        <name>L-glutamine</name>
        <dbReference type="ChEBI" id="CHEBI:58359"/>
    </ligand>
</feature>
<feature type="binding site" evidence="1">
    <location>
        <position position="220"/>
    </location>
    <ligand>
        <name>L-glutamine</name>
        <dbReference type="ChEBI" id="CHEBI:58359"/>
    </ligand>
</feature>
<feature type="binding site" evidence="1">
    <location>
        <position position="246"/>
    </location>
    <ligand>
        <name>L-glutamine</name>
        <dbReference type="ChEBI" id="CHEBI:58359"/>
    </ligand>
</feature>
<feature type="binding site" evidence="1">
    <location>
        <position position="249"/>
    </location>
    <ligand>
        <name>L-glutamine</name>
        <dbReference type="ChEBI" id="CHEBI:58359"/>
    </ligand>
</feature>
<feature type="binding site" evidence="1">
    <location>
        <position position="287"/>
    </location>
    <ligand>
        <name>L-glutamine</name>
        <dbReference type="ChEBI" id="CHEBI:58359"/>
    </ligand>
</feature>
<feature type="binding site" evidence="1">
    <location>
        <position position="289"/>
    </location>
    <ligand>
        <name>L-glutamine</name>
        <dbReference type="ChEBI" id="CHEBI:58359"/>
    </ligand>
</feature>
<feature type="binding site" evidence="1">
    <location>
        <position position="290"/>
    </location>
    <ligand>
        <name>L-glutamine</name>
        <dbReference type="ChEBI" id="CHEBI:58359"/>
    </ligand>
</feature>
<dbReference type="EC" id="6.3.5.5" evidence="1"/>
<dbReference type="EMBL" id="CP000001">
    <property type="protein sequence ID" value="AAU16620.1"/>
    <property type="molecule type" value="Genomic_DNA"/>
</dbReference>
<dbReference type="RefSeq" id="WP_000828676.1">
    <property type="nucleotide sequence ID" value="NC_006274.1"/>
</dbReference>
<dbReference type="SMR" id="Q636D9"/>
<dbReference type="KEGG" id="bcz:BCE33L3646"/>
<dbReference type="PATRIC" id="fig|288681.22.peg.1765"/>
<dbReference type="UniPathway" id="UPA00068">
    <property type="reaction ID" value="UER00171"/>
</dbReference>
<dbReference type="UniPathway" id="UPA00070">
    <property type="reaction ID" value="UER00115"/>
</dbReference>
<dbReference type="Proteomes" id="UP000002612">
    <property type="component" value="Chromosome"/>
</dbReference>
<dbReference type="GO" id="GO:0005524">
    <property type="term" value="F:ATP binding"/>
    <property type="evidence" value="ECO:0007669"/>
    <property type="project" value="UniProtKB-UniRule"/>
</dbReference>
<dbReference type="GO" id="GO:0004088">
    <property type="term" value="F:carbamoyl-phosphate synthase (glutamine-hydrolyzing) activity"/>
    <property type="evidence" value="ECO:0007669"/>
    <property type="project" value="UniProtKB-UniRule"/>
</dbReference>
<dbReference type="GO" id="GO:0004359">
    <property type="term" value="F:glutaminase activity"/>
    <property type="evidence" value="ECO:0007669"/>
    <property type="project" value="RHEA"/>
</dbReference>
<dbReference type="GO" id="GO:0006207">
    <property type="term" value="P:'de novo' pyrimidine nucleobase biosynthetic process"/>
    <property type="evidence" value="ECO:0007669"/>
    <property type="project" value="InterPro"/>
</dbReference>
<dbReference type="GO" id="GO:0044205">
    <property type="term" value="P:'de novo' UMP biosynthetic process"/>
    <property type="evidence" value="ECO:0007669"/>
    <property type="project" value="UniProtKB-UniRule"/>
</dbReference>
<dbReference type="GO" id="GO:0006541">
    <property type="term" value="P:glutamine metabolic process"/>
    <property type="evidence" value="ECO:0007669"/>
    <property type="project" value="InterPro"/>
</dbReference>
<dbReference type="GO" id="GO:0006526">
    <property type="term" value="P:L-arginine biosynthetic process"/>
    <property type="evidence" value="ECO:0007669"/>
    <property type="project" value="UniProtKB-UniRule"/>
</dbReference>
<dbReference type="CDD" id="cd01744">
    <property type="entry name" value="GATase1_CPSase"/>
    <property type="match status" value="1"/>
</dbReference>
<dbReference type="FunFam" id="3.40.50.880:FF:000029">
    <property type="entry name" value="Carbamoyl-phosphate synthase small chain"/>
    <property type="match status" value="1"/>
</dbReference>
<dbReference type="FunFam" id="3.50.30.20:FF:000001">
    <property type="entry name" value="Carbamoyl-phosphate synthase small chain"/>
    <property type="match status" value="1"/>
</dbReference>
<dbReference type="Gene3D" id="3.40.50.880">
    <property type="match status" value="1"/>
</dbReference>
<dbReference type="Gene3D" id="3.50.30.20">
    <property type="entry name" value="Carbamoyl-phosphate synthase small subunit, N-terminal domain"/>
    <property type="match status" value="1"/>
</dbReference>
<dbReference type="HAMAP" id="MF_01209">
    <property type="entry name" value="CPSase_S_chain"/>
    <property type="match status" value="1"/>
</dbReference>
<dbReference type="InterPro" id="IPR050472">
    <property type="entry name" value="Anth_synth/Amidotransfase"/>
</dbReference>
<dbReference type="InterPro" id="IPR006274">
    <property type="entry name" value="CarbamoylP_synth_ssu"/>
</dbReference>
<dbReference type="InterPro" id="IPR002474">
    <property type="entry name" value="CarbamoylP_synth_ssu_N"/>
</dbReference>
<dbReference type="InterPro" id="IPR036480">
    <property type="entry name" value="CarbP_synth_ssu_N_sf"/>
</dbReference>
<dbReference type="InterPro" id="IPR029062">
    <property type="entry name" value="Class_I_gatase-like"/>
</dbReference>
<dbReference type="InterPro" id="IPR035686">
    <property type="entry name" value="CPSase_GATase1"/>
</dbReference>
<dbReference type="InterPro" id="IPR017926">
    <property type="entry name" value="GATASE"/>
</dbReference>
<dbReference type="NCBIfam" id="TIGR01368">
    <property type="entry name" value="CPSaseIIsmall"/>
    <property type="match status" value="1"/>
</dbReference>
<dbReference type="NCBIfam" id="NF009475">
    <property type="entry name" value="PRK12838.1"/>
    <property type="match status" value="1"/>
</dbReference>
<dbReference type="PANTHER" id="PTHR43418:SF7">
    <property type="entry name" value="CARBAMOYL-PHOSPHATE SYNTHASE SMALL CHAIN"/>
    <property type="match status" value="1"/>
</dbReference>
<dbReference type="PANTHER" id="PTHR43418">
    <property type="entry name" value="MULTIFUNCTIONAL TRYPTOPHAN BIOSYNTHESIS PROTEIN-RELATED"/>
    <property type="match status" value="1"/>
</dbReference>
<dbReference type="Pfam" id="PF00988">
    <property type="entry name" value="CPSase_sm_chain"/>
    <property type="match status" value="1"/>
</dbReference>
<dbReference type="Pfam" id="PF00117">
    <property type="entry name" value="GATase"/>
    <property type="match status" value="1"/>
</dbReference>
<dbReference type="PRINTS" id="PR00097">
    <property type="entry name" value="ANTSNTHASEII"/>
</dbReference>
<dbReference type="PRINTS" id="PR00099">
    <property type="entry name" value="CPSGATASE"/>
</dbReference>
<dbReference type="PRINTS" id="PR00096">
    <property type="entry name" value="GATASE"/>
</dbReference>
<dbReference type="SMART" id="SM01097">
    <property type="entry name" value="CPSase_sm_chain"/>
    <property type="match status" value="1"/>
</dbReference>
<dbReference type="SUPFAM" id="SSF52021">
    <property type="entry name" value="Carbamoyl phosphate synthetase, small subunit N-terminal domain"/>
    <property type="match status" value="1"/>
</dbReference>
<dbReference type="SUPFAM" id="SSF52317">
    <property type="entry name" value="Class I glutamine amidotransferase-like"/>
    <property type="match status" value="1"/>
</dbReference>
<dbReference type="PROSITE" id="PS51273">
    <property type="entry name" value="GATASE_TYPE_1"/>
    <property type="match status" value="1"/>
</dbReference>
<accession>Q636D9</accession>
<name>CARA_BACCZ</name>